<dbReference type="EMBL" id="AC022288">
    <property type="protein sequence ID" value="AAG52215.1"/>
    <property type="molecule type" value="Genomic_DNA"/>
</dbReference>
<dbReference type="EMBL" id="CP002684">
    <property type="protein sequence ID" value="AEE31645.1"/>
    <property type="molecule type" value="Genomic_DNA"/>
</dbReference>
<dbReference type="EMBL" id="CP002684">
    <property type="protein sequence ID" value="AEE31646.1"/>
    <property type="molecule type" value="Genomic_DNA"/>
</dbReference>
<dbReference type="EMBL" id="DQ056478">
    <property type="protein sequence ID" value="AAY78635.1"/>
    <property type="molecule type" value="mRNA"/>
</dbReference>
<dbReference type="EMBL" id="DQ446319">
    <property type="protein sequence ID" value="ABE65683.1"/>
    <property type="molecule type" value="mRNA"/>
</dbReference>
<dbReference type="RefSeq" id="NP_001185133.1">
    <molecule id="Q9C8V2-2"/>
    <property type="nucleotide sequence ID" value="NM_001198204.2"/>
</dbReference>
<dbReference type="RefSeq" id="NP_001319142.1">
    <molecule id="Q9C8V2-1"/>
    <property type="nucleotide sequence ID" value="NM_001333074.1"/>
</dbReference>
<dbReference type="SMR" id="Q9C8V2"/>
<dbReference type="FunCoup" id="Q9C8V2">
    <property type="interactions" value="48"/>
</dbReference>
<dbReference type="STRING" id="3702.Q9C8V2"/>
<dbReference type="iPTMnet" id="Q9C8V2"/>
<dbReference type="PaxDb" id="3702-AT1G33950.1"/>
<dbReference type="EnsemblPlants" id="AT1G33950.1">
    <molecule id="Q9C8V2-1"/>
    <property type="protein sequence ID" value="AT1G33950.1"/>
    <property type="gene ID" value="AT1G33950"/>
</dbReference>
<dbReference type="EnsemblPlants" id="AT1G33950.2">
    <molecule id="Q9C8V2-2"/>
    <property type="protein sequence ID" value="AT1G33950.2"/>
    <property type="gene ID" value="AT1G33950"/>
</dbReference>
<dbReference type="GeneID" id="840292"/>
<dbReference type="Gramene" id="AT1G33950.1">
    <molecule id="Q9C8V2-1"/>
    <property type="protein sequence ID" value="AT1G33950.1"/>
    <property type="gene ID" value="AT1G33950"/>
</dbReference>
<dbReference type="Gramene" id="AT1G33950.2">
    <molecule id="Q9C8V2-2"/>
    <property type="protein sequence ID" value="AT1G33950.2"/>
    <property type="gene ID" value="AT1G33950"/>
</dbReference>
<dbReference type="KEGG" id="ath:AT1G33950"/>
<dbReference type="Araport" id="AT1G33950"/>
<dbReference type="TAIR" id="AT1G33950">
    <property type="gene designation" value="IAN7"/>
</dbReference>
<dbReference type="eggNOG" id="ENOG502R7PE">
    <property type="taxonomic scope" value="Eukaryota"/>
</dbReference>
<dbReference type="HOGENOM" id="CLU_010468_0_1_1"/>
<dbReference type="InParanoid" id="Q9C8V2"/>
<dbReference type="OMA" id="HKGAHYS"/>
<dbReference type="PhylomeDB" id="Q9C8V2"/>
<dbReference type="PRO" id="PR:Q9C8V2"/>
<dbReference type="Proteomes" id="UP000006548">
    <property type="component" value="Chromosome 1"/>
</dbReference>
<dbReference type="ExpressionAtlas" id="Q9C8V2">
    <property type="expression patterns" value="baseline and differential"/>
</dbReference>
<dbReference type="GO" id="GO:0005525">
    <property type="term" value="F:GTP binding"/>
    <property type="evidence" value="ECO:0007669"/>
    <property type="project" value="UniProtKB-KW"/>
</dbReference>
<dbReference type="CDD" id="cd01852">
    <property type="entry name" value="AIG1"/>
    <property type="match status" value="1"/>
</dbReference>
<dbReference type="FunFam" id="3.40.50.300:FF:000840">
    <property type="entry name" value="Immune-associated nucleotide-binding protein 9"/>
    <property type="match status" value="1"/>
</dbReference>
<dbReference type="Gene3D" id="3.40.50.300">
    <property type="entry name" value="P-loop containing nucleotide triphosphate hydrolases"/>
    <property type="match status" value="1"/>
</dbReference>
<dbReference type="InterPro" id="IPR006703">
    <property type="entry name" value="G_AIG1"/>
</dbReference>
<dbReference type="InterPro" id="IPR045058">
    <property type="entry name" value="GIMA/IAN/Toc"/>
</dbReference>
<dbReference type="InterPro" id="IPR027417">
    <property type="entry name" value="P-loop_NTPase"/>
</dbReference>
<dbReference type="PANTHER" id="PTHR10903">
    <property type="entry name" value="GTPASE, IMAP FAMILY MEMBER-RELATED"/>
    <property type="match status" value="1"/>
</dbReference>
<dbReference type="PANTHER" id="PTHR10903:SF164">
    <property type="entry name" value="IMMUNE-ASSOCIATED NUCLEOTIDE-BINDING PROTEIN 7"/>
    <property type="match status" value="1"/>
</dbReference>
<dbReference type="Pfam" id="PF04548">
    <property type="entry name" value="AIG1"/>
    <property type="match status" value="1"/>
</dbReference>
<dbReference type="SUPFAM" id="SSF52540">
    <property type="entry name" value="P-loop containing nucleoside triphosphate hydrolases"/>
    <property type="match status" value="1"/>
</dbReference>
<dbReference type="PROSITE" id="PS51720">
    <property type="entry name" value="G_AIG1"/>
    <property type="match status" value="1"/>
</dbReference>
<proteinExistence type="evidence at transcript level"/>
<accession>Q9C8V2</accession>
<accession>Q1PFP4</accession>
<organism>
    <name type="scientific">Arabidopsis thaliana</name>
    <name type="common">Mouse-ear cress</name>
    <dbReference type="NCBI Taxonomy" id="3702"/>
    <lineage>
        <taxon>Eukaryota</taxon>
        <taxon>Viridiplantae</taxon>
        <taxon>Streptophyta</taxon>
        <taxon>Embryophyta</taxon>
        <taxon>Tracheophyta</taxon>
        <taxon>Spermatophyta</taxon>
        <taxon>Magnoliopsida</taxon>
        <taxon>eudicotyledons</taxon>
        <taxon>Gunneridae</taxon>
        <taxon>Pentapetalae</taxon>
        <taxon>rosids</taxon>
        <taxon>malvids</taxon>
        <taxon>Brassicales</taxon>
        <taxon>Brassicaceae</taxon>
        <taxon>Camelineae</taxon>
        <taxon>Arabidopsis</taxon>
    </lineage>
</organism>
<sequence>MNKGGAQQKGHSSKQAENIVLVGRTGNGKSATGNSLIGKKVFASKAHASGVTMKCQTHGVVTKDGHKINVIDTPGLFDLSVSAEYISKEIVRCLTLAEGGIHAVLLVLSARTRITQEEENTLRTLQALFGSQILDYVVVVFTGGDVLEECKETLEDYLGRDCPTFIKEVMRMSSNRKVVIDNKTHDEGKKAEQVHKLLSLVDDIRRSKCGEAYTDDTYHMIKEESEKLRKHHEELESKNYSEECAAEMKNQSLILYKENLKQMSEQLEKKLKDAAEAQEKALSKMTQENNELNLALKIHIPLPPITPCNIL</sequence>
<evidence type="ECO:0000250" key="1">
    <source>
        <dbReference type="UniProtKB" id="Q8NHV1"/>
    </source>
</evidence>
<evidence type="ECO:0000255" key="2"/>
<evidence type="ECO:0000255" key="3">
    <source>
        <dbReference type="PROSITE-ProRule" id="PRU01057"/>
    </source>
</evidence>
<evidence type="ECO:0000303" key="4">
    <source>
    </source>
</evidence>
<evidence type="ECO:0000305" key="5"/>
<evidence type="ECO:0000305" key="6">
    <source>
    </source>
</evidence>
<evidence type="ECO:0000312" key="7">
    <source>
        <dbReference type="Araport" id="AT1G33950"/>
    </source>
</evidence>
<evidence type="ECO:0000312" key="8">
    <source>
        <dbReference type="EMBL" id="AAG52215.1"/>
    </source>
</evidence>
<feature type="chain" id="PRO_0000438031" description="Immune-associated nucleotide-binding protein 7">
    <location>
        <begin position="1"/>
        <end position="311"/>
    </location>
</feature>
<feature type="domain" description="AIG1-type G" evidence="3">
    <location>
        <begin position="14"/>
        <end position="222"/>
    </location>
</feature>
<feature type="region of interest" description="G1" evidence="3">
    <location>
        <begin position="23"/>
        <end position="30"/>
    </location>
</feature>
<feature type="region of interest" description="G2" evidence="3">
    <location>
        <begin position="50"/>
        <end position="54"/>
    </location>
</feature>
<feature type="region of interest" description="G3" evidence="3">
    <location>
        <begin position="72"/>
        <end position="75"/>
    </location>
</feature>
<feature type="region of interest" description="G4" evidence="3">
    <location>
        <begin position="142"/>
        <end position="145"/>
    </location>
</feature>
<feature type="region of interest" description="G5" evidence="3">
    <location>
        <begin position="181"/>
        <end position="183"/>
    </location>
</feature>
<feature type="coiled-coil region" evidence="2">
    <location>
        <begin position="218"/>
        <end position="295"/>
    </location>
</feature>
<feature type="binding site" evidence="1">
    <location>
        <begin position="23"/>
        <end position="31"/>
    </location>
    <ligand>
        <name>GTP</name>
        <dbReference type="ChEBI" id="CHEBI:37565"/>
    </ligand>
</feature>
<feature type="binding site" evidence="1">
    <location>
        <position position="44"/>
    </location>
    <ligand>
        <name>GTP</name>
        <dbReference type="ChEBI" id="CHEBI:37565"/>
    </ligand>
</feature>
<feature type="binding site" evidence="1">
    <location>
        <position position="182"/>
    </location>
    <ligand>
        <name>GTP</name>
        <dbReference type="ChEBI" id="CHEBI:37565"/>
    </ligand>
</feature>
<feature type="splice variant" id="VSP_058601" description="In isoform 2.">
    <location>
        <begin position="75"/>
        <end position="80"/>
    </location>
</feature>
<comment type="alternative products">
    <event type="alternative splicing"/>
    <isoform>
        <id>Q9C8V2-1</id>
        <name>1</name>
        <sequence type="displayed"/>
    </isoform>
    <isoform>
        <id>Q9C8V2-2</id>
        <name>2</name>
        <sequence type="described" ref="VSP_058601"/>
    </isoform>
</comment>
<comment type="tissue specificity">
    <text evidence="6">Ubiquitous.</text>
</comment>
<comment type="induction">
    <text evidence="6">Up-regulated by brassinolides. Down-regulated by 2-aminoethoxyvinylglycine (AVG), high CO(2), isoxaben, and propiconazole treatments.</text>
</comment>
<comment type="similarity">
    <text evidence="5">Belongs to the TRAFAC class TrmE-Era-EngA-EngB-Septin-like GTPase superfamily. AIG1/Toc34/Toc159-like paraseptin GTPase family. IAN subfamily.</text>
</comment>
<name>IAN7_ARATH</name>
<reference key="1">
    <citation type="journal article" date="2000" name="Nature">
        <title>Sequence and analysis of chromosome 1 of the plant Arabidopsis thaliana.</title>
        <authorList>
            <person name="Theologis A."/>
            <person name="Ecker J.R."/>
            <person name="Palm C.J."/>
            <person name="Federspiel N.A."/>
            <person name="Kaul S."/>
            <person name="White O."/>
            <person name="Alonso J."/>
            <person name="Altafi H."/>
            <person name="Araujo R."/>
            <person name="Bowman C.L."/>
            <person name="Brooks S.Y."/>
            <person name="Buehler E."/>
            <person name="Chan A."/>
            <person name="Chao Q."/>
            <person name="Chen H."/>
            <person name="Cheuk R.F."/>
            <person name="Chin C.W."/>
            <person name="Chung M.K."/>
            <person name="Conn L."/>
            <person name="Conway A.B."/>
            <person name="Conway A.R."/>
            <person name="Creasy T.H."/>
            <person name="Dewar K."/>
            <person name="Dunn P."/>
            <person name="Etgu P."/>
            <person name="Feldblyum T.V."/>
            <person name="Feng J.-D."/>
            <person name="Fong B."/>
            <person name="Fujii C.Y."/>
            <person name="Gill J.E."/>
            <person name="Goldsmith A.D."/>
            <person name="Haas B."/>
            <person name="Hansen N.F."/>
            <person name="Hughes B."/>
            <person name="Huizar L."/>
            <person name="Hunter J.L."/>
            <person name="Jenkins J."/>
            <person name="Johnson-Hopson C."/>
            <person name="Khan S."/>
            <person name="Khaykin E."/>
            <person name="Kim C.J."/>
            <person name="Koo H.L."/>
            <person name="Kremenetskaia I."/>
            <person name="Kurtz D.B."/>
            <person name="Kwan A."/>
            <person name="Lam B."/>
            <person name="Langin-Hooper S."/>
            <person name="Lee A."/>
            <person name="Lee J.M."/>
            <person name="Lenz C.A."/>
            <person name="Li J.H."/>
            <person name="Li Y.-P."/>
            <person name="Lin X."/>
            <person name="Liu S.X."/>
            <person name="Liu Z.A."/>
            <person name="Luros J.S."/>
            <person name="Maiti R."/>
            <person name="Marziali A."/>
            <person name="Militscher J."/>
            <person name="Miranda M."/>
            <person name="Nguyen M."/>
            <person name="Nierman W.C."/>
            <person name="Osborne B.I."/>
            <person name="Pai G."/>
            <person name="Peterson J."/>
            <person name="Pham P.K."/>
            <person name="Rizzo M."/>
            <person name="Rooney T."/>
            <person name="Rowley D."/>
            <person name="Sakano H."/>
            <person name="Salzberg S.L."/>
            <person name="Schwartz J.R."/>
            <person name="Shinn P."/>
            <person name="Southwick A.M."/>
            <person name="Sun H."/>
            <person name="Tallon L.J."/>
            <person name="Tambunga G."/>
            <person name="Toriumi M.J."/>
            <person name="Town C.D."/>
            <person name="Utterback T."/>
            <person name="Van Aken S."/>
            <person name="Vaysberg M."/>
            <person name="Vysotskaia V.S."/>
            <person name="Walker M."/>
            <person name="Wu D."/>
            <person name="Yu G."/>
            <person name="Fraser C.M."/>
            <person name="Venter J.C."/>
            <person name="Davis R.W."/>
        </authorList>
    </citation>
    <scope>NUCLEOTIDE SEQUENCE [LARGE SCALE GENOMIC DNA]</scope>
    <source>
        <strain>cv. Columbia</strain>
    </source>
</reference>
<reference key="2">
    <citation type="journal article" date="2017" name="Plant J.">
        <title>Araport11: a complete reannotation of the Arabidopsis thaliana reference genome.</title>
        <authorList>
            <person name="Cheng C.Y."/>
            <person name="Krishnakumar V."/>
            <person name="Chan A.P."/>
            <person name="Thibaud-Nissen F."/>
            <person name="Schobel S."/>
            <person name="Town C.D."/>
        </authorList>
    </citation>
    <scope>GENOME REANNOTATION</scope>
    <source>
        <strain>cv. Columbia</strain>
    </source>
</reference>
<reference key="3">
    <citation type="submission" date="2005-05" db="EMBL/GenBank/DDBJ databases">
        <authorList>
            <person name="Underwood B.A."/>
            <person name="Xiao Y.-L."/>
            <person name="Moskal W.A. Jr."/>
            <person name="Monaghan E.L."/>
            <person name="Wang W."/>
            <person name="Redman J.C."/>
            <person name="Wu H.C."/>
            <person name="Utterback T."/>
            <person name="Town C.D."/>
        </authorList>
    </citation>
    <scope>NUCLEOTIDE SEQUENCE [LARGE SCALE MRNA] (ISOFORM 1)</scope>
    <source>
        <strain>cv. Columbia</strain>
    </source>
</reference>
<reference key="4">
    <citation type="journal article" date="2006" name="Plant Biotechnol. J.">
        <title>Simultaneous high-throughput recombinational cloning of open reading frames in closed and open configurations.</title>
        <authorList>
            <person name="Underwood B.A."/>
            <person name="Vanderhaeghen R."/>
            <person name="Whitford R."/>
            <person name="Town C.D."/>
            <person name="Hilson P."/>
        </authorList>
    </citation>
    <scope>NUCLEOTIDE SEQUENCE [LARGE SCALE MRNA] (ISOFORM 2)</scope>
    <source>
        <strain>cv. Columbia</strain>
    </source>
</reference>
<reference key="5">
    <citation type="journal article" date="2008" name="J. Plant Physiol.">
        <title>Computational identification and analysis of immune-associated nucleotide gene family in Arabidopsis thaliana.</title>
        <authorList>
            <person name="Liu C."/>
            <person name="Wang T."/>
            <person name="Zhang W."/>
            <person name="Li X."/>
        </authorList>
    </citation>
    <scope>GENE FAMILY</scope>
    <scope>NOMENCLATURE</scope>
</reference>
<protein>
    <recommendedName>
        <fullName evidence="4">Immune-associated nucleotide-binding protein 7</fullName>
        <shortName evidence="4">AtIAN7</shortName>
    </recommendedName>
    <alternativeName>
        <fullName evidence="5">AIG1-like protein</fullName>
    </alternativeName>
</protein>
<keyword id="KW-0025">Alternative splicing</keyword>
<keyword id="KW-0175">Coiled coil</keyword>
<keyword id="KW-0342">GTP-binding</keyword>
<keyword id="KW-0547">Nucleotide-binding</keyword>
<keyword id="KW-1185">Reference proteome</keyword>
<gene>
    <name evidence="4" type="primary">IAN7</name>
    <name evidence="7" type="ordered locus">At1g33950</name>
    <name evidence="8" type="ORF">T3M13.3</name>
</gene>